<organism>
    <name type="scientific">Cricetulus griseus</name>
    <name type="common">Chinese hamster</name>
    <name type="synonym">Cricetulus barabensis griseus</name>
    <dbReference type="NCBI Taxonomy" id="10029"/>
    <lineage>
        <taxon>Eukaryota</taxon>
        <taxon>Metazoa</taxon>
        <taxon>Chordata</taxon>
        <taxon>Craniata</taxon>
        <taxon>Vertebrata</taxon>
        <taxon>Euteleostomi</taxon>
        <taxon>Mammalia</taxon>
        <taxon>Eutheria</taxon>
        <taxon>Euarchontoglires</taxon>
        <taxon>Glires</taxon>
        <taxon>Rodentia</taxon>
        <taxon>Myomorpha</taxon>
        <taxon>Muroidea</taxon>
        <taxon>Cricetidae</taxon>
        <taxon>Cricetinae</taxon>
        <taxon>Cricetulus</taxon>
    </lineage>
</organism>
<dbReference type="EMBL" id="U12330">
    <property type="protein sequence ID" value="AAA74141.1"/>
    <property type="molecule type" value="mRNA"/>
</dbReference>
<dbReference type="EMBL" id="U12329">
    <property type="protein sequence ID" value="AAA74140.1"/>
    <property type="status" value="ALT_TERM"/>
    <property type="molecule type" value="mRNA"/>
</dbReference>
<dbReference type="EMBL" id="U22819">
    <property type="protein sequence ID" value="AAA85719.1"/>
    <property type="status" value="ALT_TERM"/>
    <property type="molecule type" value="mRNA"/>
</dbReference>
<dbReference type="EMBL" id="U22818">
    <property type="protein sequence ID" value="AAA85718.1"/>
    <property type="status" value="ALT_TERM"/>
    <property type="molecule type" value="mRNA"/>
</dbReference>
<dbReference type="EMBL" id="JH001848">
    <property type="status" value="NOT_ANNOTATED_CDS"/>
    <property type="molecule type" value="Genomic_DNA"/>
</dbReference>
<dbReference type="PIR" id="B54962">
    <property type="entry name" value="B54962"/>
</dbReference>
<dbReference type="RefSeq" id="NP_001230933.1">
    <property type="nucleotide sequence ID" value="NM_001244004.1"/>
</dbReference>
<dbReference type="SMR" id="Q60429"/>
<dbReference type="CORUM" id="Q60429"/>
<dbReference type="PaxDb" id="10029-NP_001230933.1"/>
<dbReference type="GeneID" id="100689017"/>
<dbReference type="KEGG" id="cge:100689017"/>
<dbReference type="CTD" id="6721"/>
<dbReference type="eggNOG" id="KOG2588">
    <property type="taxonomic scope" value="Eukaryota"/>
</dbReference>
<dbReference type="OrthoDB" id="2133190at2759"/>
<dbReference type="Proteomes" id="UP000001075">
    <property type="component" value="Unassembled WGS sequence"/>
</dbReference>
<dbReference type="Proteomes" id="UP000694386">
    <property type="component" value="Unplaced"/>
</dbReference>
<dbReference type="Proteomes" id="UP001108280">
    <property type="component" value="Chromosome 2"/>
</dbReference>
<dbReference type="GO" id="GO:0005789">
    <property type="term" value="C:endoplasmic reticulum membrane"/>
    <property type="evidence" value="ECO:0007669"/>
    <property type="project" value="UniProtKB-SubCell"/>
</dbReference>
<dbReference type="GO" id="GO:0012507">
    <property type="term" value="C:ER to Golgi transport vesicle membrane"/>
    <property type="evidence" value="ECO:0007669"/>
    <property type="project" value="UniProtKB-SubCell"/>
</dbReference>
<dbReference type="GO" id="GO:0000139">
    <property type="term" value="C:Golgi membrane"/>
    <property type="evidence" value="ECO:0007669"/>
    <property type="project" value="UniProtKB-SubCell"/>
</dbReference>
<dbReference type="GO" id="GO:0005634">
    <property type="term" value="C:nucleus"/>
    <property type="evidence" value="ECO:0007669"/>
    <property type="project" value="UniProtKB-SubCell"/>
</dbReference>
<dbReference type="GO" id="GO:0032936">
    <property type="term" value="C:SREBP-SCAP complex"/>
    <property type="evidence" value="ECO:0000314"/>
    <property type="project" value="UniProtKB"/>
</dbReference>
<dbReference type="GO" id="GO:0000981">
    <property type="term" value="F:DNA-binding transcription factor activity, RNA polymerase II-specific"/>
    <property type="evidence" value="ECO:0007669"/>
    <property type="project" value="TreeGrafter"/>
</dbReference>
<dbReference type="GO" id="GO:0046983">
    <property type="term" value="F:protein dimerization activity"/>
    <property type="evidence" value="ECO:0007669"/>
    <property type="project" value="InterPro"/>
</dbReference>
<dbReference type="GO" id="GO:0000978">
    <property type="term" value="F:RNA polymerase II cis-regulatory region sequence-specific DNA binding"/>
    <property type="evidence" value="ECO:0007669"/>
    <property type="project" value="TreeGrafter"/>
</dbReference>
<dbReference type="GO" id="GO:0008203">
    <property type="term" value="P:cholesterol metabolic process"/>
    <property type="evidence" value="ECO:0007669"/>
    <property type="project" value="UniProtKB-KW"/>
</dbReference>
<dbReference type="GO" id="GO:0010886">
    <property type="term" value="P:positive regulation of cholesterol storage"/>
    <property type="evidence" value="ECO:0007669"/>
    <property type="project" value="TreeGrafter"/>
</dbReference>
<dbReference type="GO" id="GO:0045944">
    <property type="term" value="P:positive regulation of transcription by RNA polymerase II"/>
    <property type="evidence" value="ECO:0007669"/>
    <property type="project" value="TreeGrafter"/>
</dbReference>
<dbReference type="GO" id="GO:0008593">
    <property type="term" value="P:regulation of Notch signaling pathway"/>
    <property type="evidence" value="ECO:0000250"/>
    <property type="project" value="UniProtKB"/>
</dbReference>
<dbReference type="CDD" id="cd18922">
    <property type="entry name" value="bHLHzip_SREBP2"/>
    <property type="match status" value="1"/>
</dbReference>
<dbReference type="FunFam" id="4.10.280.10:FF:000016">
    <property type="entry name" value="Sterol regulatory element-binding transcription factor 1"/>
    <property type="match status" value="1"/>
</dbReference>
<dbReference type="Gene3D" id="4.10.280.10">
    <property type="entry name" value="Helix-loop-helix DNA-binding domain"/>
    <property type="match status" value="1"/>
</dbReference>
<dbReference type="InterPro" id="IPR011598">
    <property type="entry name" value="bHLH_dom"/>
</dbReference>
<dbReference type="InterPro" id="IPR036638">
    <property type="entry name" value="HLH_DNA-bd_sf"/>
</dbReference>
<dbReference type="InterPro" id="IPR003006">
    <property type="entry name" value="Ig/MHC_CS"/>
</dbReference>
<dbReference type="PANTHER" id="PTHR46062">
    <property type="entry name" value="STEROL REGULATORY ELEMENT-BINDING PROTEIN"/>
    <property type="match status" value="1"/>
</dbReference>
<dbReference type="PANTHER" id="PTHR46062:SF3">
    <property type="entry name" value="STEROL REGULATORY ELEMENT-BINDING PROTEIN 2"/>
    <property type="match status" value="1"/>
</dbReference>
<dbReference type="Pfam" id="PF00010">
    <property type="entry name" value="HLH"/>
    <property type="match status" value="1"/>
</dbReference>
<dbReference type="SMART" id="SM00353">
    <property type="entry name" value="HLH"/>
    <property type="match status" value="1"/>
</dbReference>
<dbReference type="SUPFAM" id="SSF47459">
    <property type="entry name" value="HLH, helix-loop-helix DNA-binding domain"/>
    <property type="match status" value="1"/>
</dbReference>
<dbReference type="PROSITE" id="PS50888">
    <property type="entry name" value="BHLH"/>
    <property type="match status" value="1"/>
</dbReference>
<keyword id="KW-0010">Activator</keyword>
<keyword id="KW-0153">Cholesterol metabolism</keyword>
<keyword id="KW-0160">Chromosomal rearrangement</keyword>
<keyword id="KW-0968">Cytoplasmic vesicle</keyword>
<keyword id="KW-0238">DNA-binding</keyword>
<keyword id="KW-0256">Endoplasmic reticulum</keyword>
<keyword id="KW-0333">Golgi apparatus</keyword>
<keyword id="KW-1017">Isopeptide bond</keyword>
<keyword id="KW-0443">Lipid metabolism</keyword>
<keyword id="KW-0472">Membrane</keyword>
<keyword id="KW-0539">Nucleus</keyword>
<keyword id="KW-0597">Phosphoprotein</keyword>
<keyword id="KW-1185">Reference proteome</keyword>
<keyword id="KW-0753">Steroid metabolism</keyword>
<keyword id="KW-1207">Sterol metabolism</keyword>
<keyword id="KW-0804">Transcription</keyword>
<keyword id="KW-0805">Transcription regulation</keyword>
<keyword id="KW-0812">Transmembrane</keyword>
<keyword id="KW-1133">Transmembrane helix</keyword>
<keyword id="KW-0832">Ubl conjugation</keyword>
<protein>
    <recommendedName>
        <fullName evidence="9">Sterol regulatory element-binding protein 2</fullName>
        <shortName evidence="9">SREBP-2</shortName>
    </recommendedName>
    <alternativeName>
        <fullName evidence="9">Sterol regulatory element-binding transcription factor 2</fullName>
    </alternativeName>
    <component>
        <recommendedName>
            <fullName evidence="10">Processed sterol regulatory element-binding protein 2</fullName>
        </recommendedName>
        <alternativeName>
            <fullName evidence="10">Transcription factor SREBF2</fullName>
        </alternativeName>
    </component>
</protein>
<gene>
    <name type="primary">SREBF2</name>
    <name evidence="9" type="synonym">SREBP2</name>
</gene>
<feature type="chain" id="PRO_0000127451" description="Sterol regulatory element-binding protein 2">
    <location>
        <begin position="1"/>
        <end position="1139"/>
    </location>
</feature>
<feature type="chain" id="PRO_0000314032" description="Processed sterol regulatory element-binding protein 2" evidence="2">
    <location>
        <begin position="1"/>
        <end position="482"/>
    </location>
</feature>
<feature type="topological domain" description="Cytoplasmic" evidence="4">
    <location>
        <begin position="1"/>
        <end position="479"/>
    </location>
</feature>
<feature type="transmembrane region" description="Helical" evidence="4">
    <location>
        <begin position="480"/>
        <end position="500"/>
    </location>
</feature>
<feature type="topological domain" description="Lumenal" evidence="4">
    <location>
        <begin position="501"/>
        <end position="531"/>
    </location>
</feature>
<feature type="transmembrane region" description="Helical" evidence="4">
    <location>
        <begin position="532"/>
        <end position="552"/>
    </location>
</feature>
<feature type="topological domain" description="Cytoplasmic" evidence="4">
    <location>
        <begin position="553"/>
        <end position="1139"/>
    </location>
</feature>
<feature type="domain" description="bHLH" evidence="5">
    <location>
        <begin position="328"/>
        <end position="378"/>
    </location>
</feature>
<feature type="region of interest" description="Transcriptional activation (acidic)" evidence="1 2">
    <location>
        <begin position="1"/>
        <end position="50"/>
    </location>
</feature>
<feature type="region of interest" description="Disordered" evidence="6">
    <location>
        <begin position="48"/>
        <end position="104"/>
    </location>
</feature>
<feature type="region of interest" description="Disordered" evidence="6">
    <location>
        <begin position="119"/>
        <end position="143"/>
    </location>
</feature>
<feature type="region of interest" description="Interaction with LMNA" evidence="3">
    <location>
        <begin position="235"/>
        <end position="489"/>
    </location>
</feature>
<feature type="region of interest" description="Leucine-zipper">
    <location>
        <begin position="378"/>
        <end position="399"/>
    </location>
</feature>
<feature type="compositionally biased region" description="Low complexity" evidence="6">
    <location>
        <begin position="61"/>
        <end position="77"/>
    </location>
</feature>
<feature type="compositionally biased region" description="Polar residues" evidence="6">
    <location>
        <begin position="90"/>
        <end position="104"/>
    </location>
</feature>
<feature type="compositionally biased region" description="Pro residues" evidence="6">
    <location>
        <begin position="119"/>
        <end position="138"/>
    </location>
</feature>
<feature type="site" description="Breakpoint for translocation to form SREBP-2 fusion proteins in srd phenotypes">
    <location>
        <begin position="460"/>
        <end position="461"/>
    </location>
</feature>
<feature type="site" description="Cleavage; by caspase-3 and caspase-7" evidence="2">
    <location>
        <begin position="466"/>
        <end position="467"/>
    </location>
</feature>
<feature type="site" description="Cleavage; by MBTPS2" evidence="2">
    <location>
        <begin position="482"/>
        <end position="483"/>
    </location>
</feature>
<feature type="site" description="Cleavage; by MBTPS1" evidence="2">
    <location>
        <begin position="520"/>
        <end position="521"/>
    </location>
</feature>
<feature type="modified residue" description="Phosphoserine" evidence="2">
    <location>
        <position position="1096"/>
    </location>
</feature>
<feature type="cross-link" description="Glycyl lysine isopeptide (Lys-Gly) (interchain with G-Cter in SUMO2)" evidence="2">
    <location>
        <position position="462"/>
    </location>
</feature>
<feature type="sequence variant" description="In 50% of the molecules.">
    <original>S</original>
    <variation>N</variation>
    <location>
        <position position="493"/>
    </location>
</feature>
<evidence type="ECO:0000250" key="1">
    <source>
        <dbReference type="UniProtKB" id="P36956"/>
    </source>
</evidence>
<evidence type="ECO:0000250" key="2">
    <source>
        <dbReference type="UniProtKB" id="Q12772"/>
    </source>
</evidence>
<evidence type="ECO:0000250" key="3">
    <source>
        <dbReference type="UniProtKB" id="Q3U1N2"/>
    </source>
</evidence>
<evidence type="ECO:0000255" key="4"/>
<evidence type="ECO:0000255" key="5">
    <source>
        <dbReference type="PROSITE-ProRule" id="PRU00981"/>
    </source>
</evidence>
<evidence type="ECO:0000256" key="6">
    <source>
        <dbReference type="SAM" id="MobiDB-lite"/>
    </source>
</evidence>
<evidence type="ECO:0000269" key="7">
    <source>
    </source>
</evidence>
<evidence type="ECO:0000269" key="8">
    <source>
    </source>
</evidence>
<evidence type="ECO:0000303" key="9">
    <source>
    </source>
</evidence>
<evidence type="ECO:0000305" key="10"/>
<reference key="1">
    <citation type="journal article" date="1994" name="Genes Dev.">
        <title>Sterol-resistant transcription in CHO cells caused by gene rearrangement that truncates SREBP-2.</title>
        <authorList>
            <person name="Yang J."/>
            <person name="Sato R."/>
            <person name="Goldstein J.L."/>
            <person name="Brown M.S."/>
        </authorList>
    </citation>
    <scope>NUCLEOTIDE SEQUENCE [MRNA]</scope>
    <scope>FUNCTION</scope>
    <scope>CHROMOSOMAL TRANSLOCATION SRD-1</scope>
</reference>
<reference key="2">
    <citation type="journal article" date="1995" name="J. Biol. Chem.">
        <title>Three different rearrangements in a single intron truncate sterol regulatory element binding protein-2 and produce sterol-resistant phenotype in three cell lines. Role of introns in protein evolution.</title>
        <authorList>
            <person name="Yang J."/>
            <person name="Brown M.S."/>
            <person name="Ho Y.K."/>
            <person name="Goldstein J.L."/>
        </authorList>
    </citation>
    <scope>NUCLEOTIDE SEQUENCE [MRNA]</scope>
    <scope>CHROMOSOMAL TRANSLOCATIONS SRD-1; SRD-2 AND SRD-3</scope>
</reference>
<reference key="3">
    <citation type="journal article" date="2011" name="Nat. Biotechnol.">
        <title>The genomic sequence of the Chinese hamster ovary (CHO)-K1 cell line.</title>
        <authorList>
            <person name="Xu X."/>
            <person name="Nagarajan H."/>
            <person name="Lewis N.E."/>
            <person name="Pan S."/>
            <person name="Cai Z."/>
            <person name="Liu X."/>
            <person name="Chen W."/>
            <person name="Xie M."/>
            <person name="Wang W."/>
            <person name="Hammond S."/>
            <person name="Andersen M.R."/>
            <person name="Neff N."/>
            <person name="Passarelli B."/>
            <person name="Koh W."/>
            <person name="Fan H.C."/>
            <person name="Wang J."/>
            <person name="Gui Y."/>
            <person name="Lee K.H."/>
            <person name="Betenbaugh M.J."/>
            <person name="Quake S.R."/>
            <person name="Famili I."/>
            <person name="Palsson B.O."/>
            <person name="Wang J."/>
        </authorList>
    </citation>
    <scope>NUCLEOTIDE SEQUENCE [LARGE SCALE GENOMIC DNA]</scope>
</reference>
<sequence>MDESSELGGLETMDTLTELGDELTLGDIDEMLQFVSNQVGEFPDLFSEQLCSSFPGGGSSGSSSSSNSSSSSGSNSRGNGGAATDPGVQRSFSQVPLPTFSPSTASPQALALQVKVSPTPPRATPVLQPRPQPQPQPQPSAQLQQQTVMITPTFSTAPQTRIIQQPLIYQNAATSFQVLQAQVQSLVTSSQVQPVTIQQQVQTVQAQRVLTQTANGTLQTLAPATVQTVAAPQVQQVPVLVQPQIIKTDSLVLTTLKTDGSPVMAAVQNPALTALTTPLQTGALQVPTLVGSNGTILTTMPVMMGQEKVPIKQVPGGVKQLEPPKEGERRTTHNIIEKRYRSSINDKIIELKDLVMGTDAKMHKSGVLRKAIDYIKYLQQVNHKLRQENMVLKLANQKNKLLKGIDLGSLVDSDVDLKIEDFNQNVLLMSPPASDSGSQAGFSPYSIDSEPGSPLLDDAKVKDEPDSPPVALGMVDRSRILLCVLTFLGLSFSPLTSLLQWGGAHDTDQHPYSGSGRSVLSLESGSGGWFDWMMPTLLLWLVNGVIVLSVFVKLLVHGEPVIRPHTRSSVTFWRHRKQADLDLARGDFAAAAANLQTCLSVLGRALPTSRLDLACSLSWNVIRYSLQKLRLVRWILKKVFQRWRATPATAAGFEDEAKSSARDAALAYHRLHQLHITGKLPAGSTCSDVHMALCAVNLAECAEEKIPPSTLIEIHLTAAMGLKTGCGGKLGFLASYFLNRAQSLCGPEHSTVPDSLRWLCHPLGQKFFMERSWSIKSAAKESLYCAQRNPADPIAQVHQAFCKNLLERAVESLVKPQSKKKSGDQEDESCEFSSALEYLRLLHSFVDSVGFVTPPFSSSSVLKSALGPDIICRWWTSAVTMAISWLQGDDAAVRSHFTEVERIPKALEVTESPLVKAVFYACRAMHASLSGKGDGQQNSFCHCERASGHLWNSLNVSGATSDPSLNHVVQLLTCDLLLSLRTALWQKQAGASQGLGETYHASGTELAGFQRDLGSLRRLAHSFRPAYRKVFLHEPTVRLMAGANPTRTHQLLEHSLRRRTSQNTKHGEIDTWPGQRERATAILLACRHLPLSFLSSPGQRAVLLAEAARTLEKVGDRRSCNDCQQMIVKLGGGTAIAAS</sequence>
<proteinExistence type="evidence at transcript level"/>
<accession>Q60429</accession>
<accession>Q60418</accession>
<accession>Q60427</accession>
<accession>Q60428</accession>
<name>SRBP2_CRIGR</name>
<comment type="function">
    <molecule>Sterol regulatory element-binding protein 2</molecule>
    <text evidence="2">Precursor of the transcription factor form (Processed sterol regulatory element-binding protein 2), which is embedded in the endoplasmic reticulum membrane. Low sterol concentrations promote processing of this form, releasing the transcription factor form that translocates into the nucleus and activates transcription of genes involved in cholesterol biosynthesis.</text>
</comment>
<comment type="function">
    <molecule>Processed sterol regulatory element-binding protein 2</molecule>
    <text evidence="2 8">Key transcription factor that regulates expression of genes involved in cholesterol biosynthesis (PubMed:7958866). Binds to the sterol regulatory element 1 (SRE-1) (5'-ATCACCCCAC-3') (By similarity). Has dual sequence specificity binding to both an E-box motif (5'-ATCACGTGA-3') and to SRE-1 (5'-ATCACCCCAC-3'). Regulates transcription of genes related to cholesterol synthesis pathway (By similarity).</text>
</comment>
<comment type="activity regulation">
    <text evidence="3">Activation by cleavage is down-regulated upon activation of SIRT3-dependent PRKAA1/AMPK-alpha signaling cascade which leads to inhibition of ATP-consuming lipogenesis to restore cellular energy balance.</text>
</comment>
<comment type="subunit">
    <molecule>Processed sterol regulatory element-binding protein 2</molecule>
    <text evidence="3">Homodimer; efficient DNA binding of the soluble transcription factor fragment requires dimerization with another bHLH protein. Interacts with LMNA.</text>
</comment>
<comment type="subunit">
    <molecule>Sterol regulatory element-binding protein 2</molecule>
    <text evidence="2">Forms a tight complex with SCAP, the SCAP-SREBP complex, in the endoplasmic reticulum membrane and the Golgi apparatus. Interacts with PAQR3; the interaction anchors the SCAP-SREBP complex to the Golgi apparatus in low cholesterol conditions. Interacts (via C-terminal domain) with RNF139.</text>
</comment>
<comment type="subcellular location">
    <molecule>Sterol regulatory element-binding protein 2</molecule>
    <subcellularLocation>
        <location evidence="2">Endoplasmic reticulum membrane</location>
        <topology evidence="4">Multi-pass membrane protein</topology>
    </subcellularLocation>
    <subcellularLocation>
        <location evidence="2">Golgi apparatus membrane</location>
        <topology evidence="4">Multi-pass membrane protein</topology>
    </subcellularLocation>
    <subcellularLocation>
        <location evidence="2">Cytoplasmic vesicle</location>
        <location evidence="2">COPII-coated vesicle membrane</location>
        <topology evidence="4">Multi-pass membrane protein</topology>
    </subcellularLocation>
    <text evidence="2">At high sterol concentrations, the SCAP-SREBP is retained in the endoplasmic reticulum. Low sterol concentrations promote recruitment into COPII-coated vesicles and transport of the SCAP-SREBP to the Golgi, where it is processed.</text>
</comment>
<comment type="subcellular location">
    <molecule>Processed sterol regulatory element-binding protein 2</molecule>
    <subcellularLocation>
        <location evidence="2">Nucleus</location>
    </subcellularLocation>
    <text evidence="3">Transported into the nucleus with the help of importin-beta. Dimerization of the bHLH domain is a prerequisite for importin beta-dependent nuclear import.</text>
</comment>
<comment type="PTM">
    <molecule>Sterol regulatory element-binding protein 2</molecule>
    <text evidence="2">Processed in the Golgi apparatus, releasing the protein from the membrane. At low cholesterol the SCAP-SREBP complex is recruited into COPII vesicles for export from the endoplasmic reticulum. In the Golgi, complex SREBPs are cleaved sequentially by site-1 (MBTPS1, S1P) and site-2 (MBTPS2, S2P) proteases. The first cleavage by site-1 protease occurs within the luminal loop, the second cleavage by site-2 protease occurs within the first transmembrane domain, releasing the transcription factor from the Golgi membrane. Apoptosis triggers cleavage by the cysteine proteases caspase-3 and caspase-7. Cleavage and activation is induced by mediated cholesterol efflux.</text>
</comment>
<comment type="PTM">
    <text evidence="3">Phosphorylated by AMPK, leading to suppress protein processing and nuclear translocation, and repress target gene expression.</text>
</comment>
<comment type="PTM">
    <molecule>Sterol regulatory element-binding protein 2</molecule>
    <text evidence="2">SCAP-free SREBF2 is ubiquitinated by the BCR(ARMC5) complex, leading to its degradation.</text>
</comment>
<comment type="PTM">
    <molecule>Processed sterol regulatory element-binding protein 2</molecule>
    <text evidence="2">Ubiquitinated; the nuclear form has a rapid turnover and is rapidly ubiquitinated and degraded by the proteasome in the nucleus.</text>
</comment>
<comment type="disease">
    <text evidence="7 8">Sterol-resistant defective (srd) phenotypes express truncated forms of SREBP-2 protein, often found fused to other proteins, as is the case in SRD-1, where SREBP-2 is fused to an out-of-frame KU p70 protein or, in SRD-2 where the fusion protein is a LIM domain-containing protein. Srd phenotypes are resistant to sterol biosynthesis repression by sterols.</text>
</comment>
<comment type="similarity">
    <text evidence="10">Belongs to the SREBP family.</text>
</comment>